<name>GSIA_ECOLI</name>
<sequence length="623" mass="69114">MPHSDELDAGNVLAVENLNIAFMQDQQKIAAVRNLSFSLQRGETLAIVGESGSGKSVTALALMRLLEQAGGLVQCDKMLLQRRSREVIELSEQNAAQMRHVRGADMAMIFQEPMTSLNPVFTVGEQIAESIRLHQNASREEAMVEAKRMLDQVRIPEAQTILSRYPHQLSGGMRQRVMIAMALSCRPAVLIADEPTTALDVTIQAQILQLIKVLQKEMSMGVIFITHDMGVVAEIADRVLVMYQGEAVETGTVEQIFHAPQHPYTRALLAAVPQLGAMKGLDYPRRFPLISLEHPAKQAPPIEQKTVVDGEPVLRVRNLVTRFPLRSGLLNRVTREVHAVEKVSFDLWPGETLSLVGESGSGKSTTGRALLRLVESQGGEIIFNGQRIDTLSPGKLQALRRDIQFIFQDPYASLDPRQTIGDSIIEPLRVHGLLPGKDAAARVAWLLERVGLLPEHAWRYPHEFSGGQRQRICIARALALNPKVIIADEAVSALDVSIRGQIINLLLDLQRDFGIAYLFISHDMAVVERISHRVAVMYLGQIVEIGPRRAVFENPQHPYTRKLLAAVPVAEPSRQRPQRVLLSDDLPSNIHLRGEEVAAVSLQCVGPGHYVAQPQSEYAFMRR</sequence>
<comment type="function">
    <text evidence="2">Part of the ABC transporter complex GsiABCD involved in glutathione import. Responsible for energy coupling to the transport system.</text>
</comment>
<comment type="catalytic activity">
    <reaction evidence="2">
        <text>glutathione(out) + ATP + H2O = glutathione(in) + ADP + phosphate + H(+)</text>
        <dbReference type="Rhea" id="RHEA:29791"/>
        <dbReference type="ChEBI" id="CHEBI:15377"/>
        <dbReference type="ChEBI" id="CHEBI:15378"/>
        <dbReference type="ChEBI" id="CHEBI:30616"/>
        <dbReference type="ChEBI" id="CHEBI:43474"/>
        <dbReference type="ChEBI" id="CHEBI:57925"/>
        <dbReference type="ChEBI" id="CHEBI:456216"/>
        <dbReference type="EC" id="7.4.2.10"/>
    </reaction>
</comment>
<comment type="activity regulation">
    <text evidence="2">Inhibited by verapamil but not by carbonyl cyanide m-chlorophenylhydrazone (CCCP).</text>
</comment>
<comment type="subunit">
    <text evidence="5">The complex is composed of two ATP-binding proteins (GsiA), two transmembrane proteins (GsiC and GsiD) and a solute-binding protein (GsiB).</text>
</comment>
<comment type="subcellular location">
    <subcellularLocation>
        <location evidence="4">Cell inner membrane</location>
        <topology evidence="4">Peripheral membrane protein</topology>
    </subcellularLocation>
</comment>
<comment type="similarity">
    <text evidence="4">Belongs to the ABC transporter superfamily. Glutathione importer (TC 3.A.1.5.11) family.</text>
</comment>
<comment type="sequence caution" evidence="4">
    <conflict type="erroneous initiation">
        <sequence resource="EMBL-CDS" id="BAA35517"/>
    </conflict>
    <text>Truncated N-terminus.</text>
</comment>
<reference key="1">
    <citation type="journal article" date="1996" name="DNA Res.">
        <title>A 718-kb DNA sequence of the Escherichia coli K-12 genome corresponding to the 12.7-28.0 min region on the linkage map.</title>
        <authorList>
            <person name="Oshima T."/>
            <person name="Aiba H."/>
            <person name="Baba T."/>
            <person name="Fujita K."/>
            <person name="Hayashi K."/>
            <person name="Honjo A."/>
            <person name="Ikemoto K."/>
            <person name="Inada T."/>
            <person name="Itoh T."/>
            <person name="Kajihara M."/>
            <person name="Kanai K."/>
            <person name="Kashimoto K."/>
            <person name="Kimura S."/>
            <person name="Kitagawa M."/>
            <person name="Makino K."/>
            <person name="Masuda S."/>
            <person name="Miki T."/>
            <person name="Mizobuchi K."/>
            <person name="Mori H."/>
            <person name="Motomura K."/>
            <person name="Nakamura Y."/>
            <person name="Nashimoto H."/>
            <person name="Nishio Y."/>
            <person name="Saito N."/>
            <person name="Sampei G."/>
            <person name="Seki Y."/>
            <person name="Tagami H."/>
            <person name="Takemoto K."/>
            <person name="Wada C."/>
            <person name="Yamamoto Y."/>
            <person name="Yano M."/>
            <person name="Horiuchi T."/>
        </authorList>
    </citation>
    <scope>NUCLEOTIDE SEQUENCE [LARGE SCALE GENOMIC DNA]</scope>
    <source>
        <strain>K12 / W3110 / ATCC 27325 / DSM 5911</strain>
    </source>
</reference>
<reference key="2">
    <citation type="journal article" date="1997" name="Science">
        <title>The complete genome sequence of Escherichia coli K-12.</title>
        <authorList>
            <person name="Blattner F.R."/>
            <person name="Plunkett G. III"/>
            <person name="Bloch C.A."/>
            <person name="Perna N.T."/>
            <person name="Burland V."/>
            <person name="Riley M."/>
            <person name="Collado-Vides J."/>
            <person name="Glasner J.D."/>
            <person name="Rode C.K."/>
            <person name="Mayhew G.F."/>
            <person name="Gregor J."/>
            <person name="Davis N.W."/>
            <person name="Kirkpatrick H.A."/>
            <person name="Goeden M.A."/>
            <person name="Rose D.J."/>
            <person name="Mau B."/>
            <person name="Shao Y."/>
        </authorList>
    </citation>
    <scope>NUCLEOTIDE SEQUENCE [LARGE SCALE GENOMIC DNA]</scope>
    <source>
        <strain>K12 / MG1655 / ATCC 47076</strain>
    </source>
</reference>
<reference key="3">
    <citation type="journal article" date="2006" name="Mol. Syst. Biol.">
        <title>Highly accurate genome sequences of Escherichia coli K-12 strains MG1655 and W3110.</title>
        <authorList>
            <person name="Hayashi K."/>
            <person name="Morooka N."/>
            <person name="Yamamoto Y."/>
            <person name="Fujita K."/>
            <person name="Isono K."/>
            <person name="Choi S."/>
            <person name="Ohtsubo E."/>
            <person name="Baba T."/>
            <person name="Wanner B.L."/>
            <person name="Mori H."/>
            <person name="Horiuchi T."/>
        </authorList>
    </citation>
    <scope>NUCLEOTIDE SEQUENCE [LARGE SCALE GENOMIC DNA]</scope>
    <source>
        <strain>K12 / W3110 / ATCC 27325 / DSM 5911</strain>
    </source>
</reference>
<reference key="4">
    <citation type="journal article" date="2005" name="J. Bacteriol.">
        <title>The yliA, -B, -C, and -D genes of Escherichia coli K-12 encode a novel glutathione importer with an ATP-binding cassette.</title>
        <authorList>
            <person name="Suzuki H."/>
            <person name="Koyanagi T."/>
            <person name="Izuka S."/>
            <person name="Onishi A."/>
            <person name="Kumagai H."/>
        </authorList>
    </citation>
    <scope>FUNCTION IN GLUTATHIONE TRANSPORT</scope>
    <scope>CATALYTIC ACTIVITY</scope>
    <scope>ACTIVITY REGULATION</scope>
    <scope>SUBUNIT</scope>
    <source>
        <strain>K12 / MG1655 / ATCC 47076</strain>
    </source>
</reference>
<proteinExistence type="evidence at protein level"/>
<dbReference type="EC" id="7.4.2.10" evidence="2"/>
<dbReference type="EMBL" id="U00096">
    <property type="protein sequence ID" value="AAC73916.2"/>
    <property type="molecule type" value="Genomic_DNA"/>
</dbReference>
<dbReference type="EMBL" id="AP009048">
    <property type="protein sequence ID" value="BAA35517.2"/>
    <property type="status" value="ALT_INIT"/>
    <property type="molecule type" value="Genomic_DNA"/>
</dbReference>
<dbReference type="PIR" id="E64820">
    <property type="entry name" value="E64820"/>
</dbReference>
<dbReference type="RefSeq" id="NP_415350.2">
    <property type="nucleotide sequence ID" value="NC_000913.3"/>
</dbReference>
<dbReference type="RefSeq" id="WP_001301279.1">
    <property type="nucleotide sequence ID" value="NZ_SSZK01000002.1"/>
</dbReference>
<dbReference type="SMR" id="P75796"/>
<dbReference type="BioGRID" id="4259981">
    <property type="interactions" value="715"/>
</dbReference>
<dbReference type="ComplexPortal" id="CPX-4325">
    <property type="entry name" value="Glutathione ABC transporter complex"/>
</dbReference>
<dbReference type="FunCoup" id="P75796">
    <property type="interactions" value="391"/>
</dbReference>
<dbReference type="STRING" id="511145.b0829"/>
<dbReference type="TCDB" id="3.A.1.5.11">
    <property type="family name" value="the atp-binding cassette (abc) superfamily"/>
</dbReference>
<dbReference type="jPOST" id="P75796"/>
<dbReference type="PaxDb" id="511145-b0829"/>
<dbReference type="EnsemblBacteria" id="AAC73916">
    <property type="protein sequence ID" value="AAC73916"/>
    <property type="gene ID" value="b0829"/>
</dbReference>
<dbReference type="GeneID" id="945457"/>
<dbReference type="KEGG" id="ecj:JW5897"/>
<dbReference type="KEGG" id="eco:b0829"/>
<dbReference type="KEGG" id="ecoc:C3026_05200"/>
<dbReference type="PATRIC" id="fig|1411691.4.peg.1449"/>
<dbReference type="EchoBASE" id="EB3245"/>
<dbReference type="eggNOG" id="COG4172">
    <property type="taxonomic scope" value="Bacteria"/>
</dbReference>
<dbReference type="HOGENOM" id="CLU_000604_86_2_6"/>
<dbReference type="InParanoid" id="P75796"/>
<dbReference type="OMA" id="KSFPHEF"/>
<dbReference type="OrthoDB" id="9784450at2"/>
<dbReference type="PhylomeDB" id="P75796"/>
<dbReference type="BioCyc" id="EcoCyc:YLIA-MONOMER"/>
<dbReference type="BioCyc" id="MetaCyc:YLIA-MONOMER"/>
<dbReference type="BRENDA" id="7.4.2.10">
    <property type="organism ID" value="2026"/>
</dbReference>
<dbReference type="PRO" id="PR:P75796"/>
<dbReference type="Proteomes" id="UP000000625">
    <property type="component" value="Chromosome"/>
</dbReference>
<dbReference type="GO" id="GO:0055052">
    <property type="term" value="C:ATP-binding cassette (ABC) transporter complex, substrate-binding subunit-containing"/>
    <property type="evidence" value="ECO:0000303"/>
    <property type="project" value="ComplexPortal"/>
</dbReference>
<dbReference type="GO" id="GO:0016020">
    <property type="term" value="C:membrane"/>
    <property type="evidence" value="ECO:0000303"/>
    <property type="project" value="ComplexPortal"/>
</dbReference>
<dbReference type="GO" id="GO:0005886">
    <property type="term" value="C:plasma membrane"/>
    <property type="evidence" value="ECO:0000314"/>
    <property type="project" value="EcoCyc"/>
</dbReference>
<dbReference type="GO" id="GO:0005524">
    <property type="term" value="F:ATP binding"/>
    <property type="evidence" value="ECO:0000255"/>
    <property type="project" value="EcoCyc"/>
</dbReference>
<dbReference type="GO" id="GO:0016887">
    <property type="term" value="F:ATP hydrolysis activity"/>
    <property type="evidence" value="ECO:0007669"/>
    <property type="project" value="InterPro"/>
</dbReference>
<dbReference type="GO" id="GO:0042626">
    <property type="term" value="F:ATPase-coupled transmembrane transporter activity"/>
    <property type="evidence" value="ECO:0000314"/>
    <property type="project" value="EcoCyc"/>
</dbReference>
<dbReference type="GO" id="GO:0034634">
    <property type="term" value="F:glutathione transmembrane transporter activity"/>
    <property type="evidence" value="ECO:0000269"/>
    <property type="project" value="EcoCyc"/>
</dbReference>
<dbReference type="GO" id="GO:0034775">
    <property type="term" value="P:glutathione transmembrane transport"/>
    <property type="evidence" value="ECO:0000269"/>
    <property type="project" value="EcoCyc"/>
</dbReference>
<dbReference type="CDD" id="cd03257">
    <property type="entry name" value="ABC_NikE_OppD_transporters"/>
    <property type="match status" value="2"/>
</dbReference>
<dbReference type="FunFam" id="3.40.50.300:FF:001061">
    <property type="entry name" value="Glutathione import ATP-binding protein GsiA"/>
    <property type="match status" value="1"/>
</dbReference>
<dbReference type="FunFam" id="3.40.50.300:FF:000016">
    <property type="entry name" value="Oligopeptide ABC transporter ATP-binding component"/>
    <property type="match status" value="1"/>
</dbReference>
<dbReference type="Gene3D" id="3.40.50.300">
    <property type="entry name" value="P-loop containing nucleotide triphosphate hydrolases"/>
    <property type="match status" value="2"/>
</dbReference>
<dbReference type="InterPro" id="IPR003593">
    <property type="entry name" value="AAA+_ATPase"/>
</dbReference>
<dbReference type="InterPro" id="IPR050319">
    <property type="entry name" value="ABC_transp_ATP-bind"/>
</dbReference>
<dbReference type="InterPro" id="IPR003439">
    <property type="entry name" value="ABC_transporter-like_ATP-bd"/>
</dbReference>
<dbReference type="InterPro" id="IPR017871">
    <property type="entry name" value="ABC_transporter-like_CS"/>
</dbReference>
<dbReference type="InterPro" id="IPR013563">
    <property type="entry name" value="Oligopep_ABC_C"/>
</dbReference>
<dbReference type="InterPro" id="IPR027417">
    <property type="entry name" value="P-loop_NTPase"/>
</dbReference>
<dbReference type="NCBIfam" id="NF007613">
    <property type="entry name" value="PRK10261.1"/>
    <property type="match status" value="1"/>
</dbReference>
<dbReference type="NCBIfam" id="NF007739">
    <property type="entry name" value="PRK10419.1"/>
    <property type="match status" value="2"/>
</dbReference>
<dbReference type="NCBIfam" id="NF008453">
    <property type="entry name" value="PRK11308.1"/>
    <property type="match status" value="2"/>
</dbReference>
<dbReference type="PANTHER" id="PTHR43776:SF15">
    <property type="entry name" value="GLUTATHIONE IMPORT ATP-BINDING PROTEIN GSIA"/>
    <property type="match status" value="1"/>
</dbReference>
<dbReference type="PANTHER" id="PTHR43776">
    <property type="entry name" value="TRANSPORT ATP-BINDING PROTEIN"/>
    <property type="match status" value="1"/>
</dbReference>
<dbReference type="Pfam" id="PF00005">
    <property type="entry name" value="ABC_tran"/>
    <property type="match status" value="2"/>
</dbReference>
<dbReference type="Pfam" id="PF08352">
    <property type="entry name" value="oligo_HPY"/>
    <property type="match status" value="2"/>
</dbReference>
<dbReference type="SMART" id="SM00382">
    <property type="entry name" value="AAA"/>
    <property type="match status" value="2"/>
</dbReference>
<dbReference type="SUPFAM" id="SSF52540">
    <property type="entry name" value="P-loop containing nucleoside triphosphate hydrolases"/>
    <property type="match status" value="2"/>
</dbReference>
<dbReference type="PROSITE" id="PS00211">
    <property type="entry name" value="ABC_TRANSPORTER_1"/>
    <property type="match status" value="2"/>
</dbReference>
<dbReference type="PROSITE" id="PS50893">
    <property type="entry name" value="ABC_TRANSPORTER_2"/>
    <property type="match status" value="2"/>
</dbReference>
<feature type="chain" id="PRO_0000093195" description="Glutathione import ATP-binding protein GsiA">
    <location>
        <begin position="1"/>
        <end position="623"/>
    </location>
</feature>
<feature type="domain" description="ABC transporter 1" evidence="1">
    <location>
        <begin position="15"/>
        <end position="269"/>
    </location>
</feature>
<feature type="domain" description="ABC transporter 2" evidence="1">
    <location>
        <begin position="314"/>
        <end position="564"/>
    </location>
</feature>
<feature type="binding site" evidence="1">
    <location>
        <begin position="49"/>
        <end position="56"/>
    </location>
    <ligand>
        <name>ATP</name>
        <dbReference type="ChEBI" id="CHEBI:30616"/>
    </ligand>
</feature>
<feature type="binding site" evidence="1">
    <location>
        <begin position="357"/>
        <end position="364"/>
    </location>
    <ligand>
        <name>ATP</name>
        <dbReference type="ChEBI" id="CHEBI:30616"/>
    </ligand>
</feature>
<organism>
    <name type="scientific">Escherichia coli (strain K12)</name>
    <dbReference type="NCBI Taxonomy" id="83333"/>
    <lineage>
        <taxon>Bacteria</taxon>
        <taxon>Pseudomonadati</taxon>
        <taxon>Pseudomonadota</taxon>
        <taxon>Gammaproteobacteria</taxon>
        <taxon>Enterobacterales</taxon>
        <taxon>Enterobacteriaceae</taxon>
        <taxon>Escherichia</taxon>
    </lineage>
</organism>
<evidence type="ECO:0000255" key="1">
    <source>
        <dbReference type="PROSITE-ProRule" id="PRU00434"/>
    </source>
</evidence>
<evidence type="ECO:0000269" key="2">
    <source>
    </source>
</evidence>
<evidence type="ECO:0000303" key="3">
    <source>
    </source>
</evidence>
<evidence type="ECO:0000305" key="4"/>
<evidence type="ECO:0000305" key="5">
    <source>
    </source>
</evidence>
<keyword id="KW-0067">ATP-binding</keyword>
<keyword id="KW-0997">Cell inner membrane</keyword>
<keyword id="KW-1003">Cell membrane</keyword>
<keyword id="KW-0378">Hydrolase</keyword>
<keyword id="KW-0472">Membrane</keyword>
<keyword id="KW-0547">Nucleotide-binding</keyword>
<keyword id="KW-1185">Reference proteome</keyword>
<keyword id="KW-0677">Repeat</keyword>
<keyword id="KW-1278">Translocase</keyword>
<keyword id="KW-0813">Transport</keyword>
<gene>
    <name evidence="3" type="primary">gsiA</name>
    <name type="synonym">yliA</name>
    <name type="ordered locus">b0829</name>
    <name type="ordered locus">JW5897</name>
</gene>
<protein>
    <recommendedName>
        <fullName evidence="4">Glutathione import ATP-binding protein GsiA</fullName>
        <ecNumber evidence="2">7.4.2.10</ecNumber>
    </recommendedName>
</protein>
<accession>P75796</accession>
<accession>Q9R3H8</accession>